<organism>
    <name type="scientific">Chromobacterium violaceum (strain ATCC 12472 / DSM 30191 / JCM 1249 / CCUG 213 / NBRC 12614 / NCIMB 9131 / NCTC 9757 / MK)</name>
    <dbReference type="NCBI Taxonomy" id="243365"/>
    <lineage>
        <taxon>Bacteria</taxon>
        <taxon>Pseudomonadati</taxon>
        <taxon>Pseudomonadota</taxon>
        <taxon>Betaproteobacteria</taxon>
        <taxon>Neisseriales</taxon>
        <taxon>Chromobacteriaceae</taxon>
        <taxon>Chromobacterium</taxon>
    </lineage>
</organism>
<protein>
    <recommendedName>
        <fullName evidence="1">2-C-methyl-D-erythritol 2,4-cyclodiphosphate synthase</fullName>
        <shortName evidence="1">MECDP-synthase</shortName>
        <shortName evidence="1">MECPP-synthase</shortName>
        <shortName evidence="1">MECPS</shortName>
        <ecNumber evidence="1">4.6.1.12</ecNumber>
    </recommendedName>
</protein>
<sequence length="158" mass="16600">MFRIGQGYDVHQLVEGRPLILGGVDIPHDKGLLGHSDADALLHAITDALLGAAALGDIGRHFPDTAAEFKGADSRALLREAAARVRAAGWRPVNVDSTLIAQRPKLAPHIDAMRANIAADLGLDVGAVNVKGKTNEKLGYLGRCEAIEAQAVCLLAQA</sequence>
<reference key="1">
    <citation type="journal article" date="2003" name="Proc. Natl. Acad. Sci. U.S.A.">
        <title>The complete genome sequence of Chromobacterium violaceum reveals remarkable and exploitable bacterial adaptability.</title>
        <authorList>
            <person name="Vasconcelos A.T.R."/>
            <person name="de Almeida D.F."/>
            <person name="Hungria M."/>
            <person name="Guimaraes C.T."/>
            <person name="Antonio R.V."/>
            <person name="Almeida F.C."/>
            <person name="de Almeida L.G.P."/>
            <person name="de Almeida R."/>
            <person name="Alves-Gomes J.A."/>
            <person name="Andrade E.M."/>
            <person name="Araripe J."/>
            <person name="de Araujo M.F.F."/>
            <person name="Astolfi-Filho S."/>
            <person name="Azevedo V."/>
            <person name="Baptista A.J."/>
            <person name="Bataus L.A.M."/>
            <person name="Batista J.S."/>
            <person name="Belo A."/>
            <person name="van den Berg C."/>
            <person name="Bogo M."/>
            <person name="Bonatto S."/>
            <person name="Bordignon J."/>
            <person name="Brigido M.M."/>
            <person name="Brito C.A."/>
            <person name="Brocchi M."/>
            <person name="Burity H.A."/>
            <person name="Camargo A.A."/>
            <person name="Cardoso D.D.P."/>
            <person name="Carneiro N.P."/>
            <person name="Carraro D.M."/>
            <person name="Carvalho C.M.B."/>
            <person name="Cascardo J.C.M."/>
            <person name="Cavada B.S."/>
            <person name="Chueire L.M.O."/>
            <person name="Creczynski-Pasa T.B."/>
            <person name="Cunha-Junior N.C."/>
            <person name="Fagundes N."/>
            <person name="Falcao C.L."/>
            <person name="Fantinatti F."/>
            <person name="Farias I.P."/>
            <person name="Felipe M.S.S."/>
            <person name="Ferrari L.P."/>
            <person name="Ferro J.A."/>
            <person name="Ferro M.I.T."/>
            <person name="Franco G.R."/>
            <person name="Freitas N.S.A."/>
            <person name="Furlan L.R."/>
            <person name="Gazzinelli R.T."/>
            <person name="Gomes E.A."/>
            <person name="Goncalves P.R."/>
            <person name="Grangeiro T.B."/>
            <person name="Grattapaglia D."/>
            <person name="Grisard E.C."/>
            <person name="Hanna E.S."/>
            <person name="Jardim S.N."/>
            <person name="Laurino J."/>
            <person name="Leoi L.C.T."/>
            <person name="Lima L.F.A."/>
            <person name="Loureiro M.F."/>
            <person name="Lyra M.C.C.P."/>
            <person name="Madeira H.M.F."/>
            <person name="Manfio G.P."/>
            <person name="Maranhao A.Q."/>
            <person name="Martins W.S."/>
            <person name="di Mauro S.M.Z."/>
            <person name="de Medeiros S.R.B."/>
            <person name="Meissner R.V."/>
            <person name="Moreira M.A.M."/>
            <person name="Nascimento F.F."/>
            <person name="Nicolas M.F."/>
            <person name="Oliveira J.G."/>
            <person name="Oliveira S.C."/>
            <person name="Paixao R.F.C."/>
            <person name="Parente J.A."/>
            <person name="Pedrosa F.O."/>
            <person name="Pena S.D.J."/>
            <person name="Pereira J.O."/>
            <person name="Pereira M."/>
            <person name="Pinto L.S.R.C."/>
            <person name="Pinto L.S."/>
            <person name="Porto J.I.R."/>
            <person name="Potrich D.P."/>
            <person name="Ramalho-Neto C.E."/>
            <person name="Reis A.M.M."/>
            <person name="Rigo L.U."/>
            <person name="Rondinelli E."/>
            <person name="Santos E.B.P."/>
            <person name="Santos F.R."/>
            <person name="Schneider M.P.C."/>
            <person name="Seuanez H.N."/>
            <person name="Silva A.M.R."/>
            <person name="da Silva A.L.C."/>
            <person name="Silva D.W."/>
            <person name="Silva R."/>
            <person name="Simoes I.C."/>
            <person name="Simon D."/>
            <person name="Soares C.M.A."/>
            <person name="Soares R.B.A."/>
            <person name="Souza E.M."/>
            <person name="Souza K.R.L."/>
            <person name="Souza R.C."/>
            <person name="Steffens M.B.R."/>
            <person name="Steindel M."/>
            <person name="Teixeira S.R."/>
            <person name="Urmenyi T."/>
            <person name="Vettore A."/>
            <person name="Wassem R."/>
            <person name="Zaha A."/>
            <person name="Simpson A.J.G."/>
        </authorList>
    </citation>
    <scope>NUCLEOTIDE SEQUENCE [LARGE SCALE GENOMIC DNA]</scope>
    <source>
        <strain>ATCC 12472 / DSM 30191 / JCM 1249 / CCUG 213 / NBRC 12614 / NCIMB 9131 / NCTC 9757 / MK</strain>
    </source>
</reference>
<comment type="function">
    <text evidence="1">Involved in the biosynthesis of isopentenyl diphosphate (IPP) and dimethylallyl diphosphate (DMAPP), two major building blocks of isoprenoid compounds. Catalyzes the conversion of 4-diphosphocytidyl-2-C-methyl-D-erythritol 2-phosphate (CDP-ME2P) to 2-C-methyl-D-erythritol 2,4-cyclodiphosphate (ME-CPP) with a corresponding release of cytidine 5-monophosphate (CMP).</text>
</comment>
<comment type="catalytic activity">
    <reaction evidence="1">
        <text>4-CDP-2-C-methyl-D-erythritol 2-phosphate = 2-C-methyl-D-erythritol 2,4-cyclic diphosphate + CMP</text>
        <dbReference type="Rhea" id="RHEA:23864"/>
        <dbReference type="ChEBI" id="CHEBI:57919"/>
        <dbReference type="ChEBI" id="CHEBI:58483"/>
        <dbReference type="ChEBI" id="CHEBI:60377"/>
        <dbReference type="EC" id="4.6.1.12"/>
    </reaction>
</comment>
<comment type="cofactor">
    <cofactor evidence="1">
        <name>a divalent metal cation</name>
        <dbReference type="ChEBI" id="CHEBI:60240"/>
    </cofactor>
    <text evidence="1">Binds 1 divalent metal cation per subunit.</text>
</comment>
<comment type="pathway">
    <text evidence="1">Isoprenoid biosynthesis; isopentenyl diphosphate biosynthesis via DXP pathway; isopentenyl diphosphate from 1-deoxy-D-xylulose 5-phosphate: step 4/6.</text>
</comment>
<comment type="subunit">
    <text evidence="1">Homotrimer.</text>
</comment>
<comment type="similarity">
    <text evidence="1">Belongs to the IspF family.</text>
</comment>
<name>ISPF_CHRVO</name>
<feature type="chain" id="PRO_0000189456" description="2-C-methyl-D-erythritol 2,4-cyclodiphosphate synthase">
    <location>
        <begin position="1"/>
        <end position="158"/>
    </location>
</feature>
<feature type="binding site" evidence="1">
    <location>
        <begin position="9"/>
        <end position="11"/>
    </location>
    <ligand>
        <name>4-CDP-2-C-methyl-D-erythritol 2-phosphate</name>
        <dbReference type="ChEBI" id="CHEBI:57919"/>
    </ligand>
</feature>
<feature type="binding site" evidence="1">
    <location>
        <position position="9"/>
    </location>
    <ligand>
        <name>a divalent metal cation</name>
        <dbReference type="ChEBI" id="CHEBI:60240"/>
    </ligand>
</feature>
<feature type="binding site" evidence="1">
    <location>
        <position position="11"/>
    </location>
    <ligand>
        <name>a divalent metal cation</name>
        <dbReference type="ChEBI" id="CHEBI:60240"/>
    </ligand>
</feature>
<feature type="binding site" evidence="1">
    <location>
        <begin position="35"/>
        <end position="36"/>
    </location>
    <ligand>
        <name>4-CDP-2-C-methyl-D-erythritol 2-phosphate</name>
        <dbReference type="ChEBI" id="CHEBI:57919"/>
    </ligand>
</feature>
<feature type="binding site" evidence="1">
    <location>
        <position position="43"/>
    </location>
    <ligand>
        <name>a divalent metal cation</name>
        <dbReference type="ChEBI" id="CHEBI:60240"/>
    </ligand>
</feature>
<feature type="binding site" evidence="1">
    <location>
        <begin position="57"/>
        <end position="59"/>
    </location>
    <ligand>
        <name>4-CDP-2-C-methyl-D-erythritol 2-phosphate</name>
        <dbReference type="ChEBI" id="CHEBI:57919"/>
    </ligand>
</feature>
<feature type="binding site" evidence="1">
    <location>
        <position position="143"/>
    </location>
    <ligand>
        <name>4-CDP-2-C-methyl-D-erythritol 2-phosphate</name>
        <dbReference type="ChEBI" id="CHEBI:57919"/>
    </ligand>
</feature>
<feature type="site" description="Transition state stabilizer" evidence="1">
    <location>
        <position position="35"/>
    </location>
</feature>
<feature type="site" description="Transition state stabilizer" evidence="1">
    <location>
        <position position="134"/>
    </location>
</feature>
<keyword id="KW-0414">Isoprene biosynthesis</keyword>
<keyword id="KW-0456">Lyase</keyword>
<keyword id="KW-0479">Metal-binding</keyword>
<keyword id="KW-1185">Reference proteome</keyword>
<dbReference type="EC" id="4.6.1.12" evidence="1"/>
<dbReference type="EMBL" id="AE016825">
    <property type="protein sequence ID" value="AAQ58934.1"/>
    <property type="molecule type" value="Genomic_DNA"/>
</dbReference>
<dbReference type="RefSeq" id="WP_011134813.1">
    <property type="nucleotide sequence ID" value="NC_005085.1"/>
</dbReference>
<dbReference type="SMR" id="Q7NYL5"/>
<dbReference type="STRING" id="243365.CV_1259"/>
<dbReference type="KEGG" id="cvi:CV_1259"/>
<dbReference type="eggNOG" id="COG0245">
    <property type="taxonomic scope" value="Bacteria"/>
</dbReference>
<dbReference type="HOGENOM" id="CLU_084630_2_0_4"/>
<dbReference type="OrthoDB" id="9804336at2"/>
<dbReference type="UniPathway" id="UPA00056">
    <property type="reaction ID" value="UER00095"/>
</dbReference>
<dbReference type="Proteomes" id="UP000001424">
    <property type="component" value="Chromosome"/>
</dbReference>
<dbReference type="GO" id="GO:0008685">
    <property type="term" value="F:2-C-methyl-D-erythritol 2,4-cyclodiphosphate synthase activity"/>
    <property type="evidence" value="ECO:0007669"/>
    <property type="project" value="UniProtKB-UniRule"/>
</dbReference>
<dbReference type="GO" id="GO:0046872">
    <property type="term" value="F:metal ion binding"/>
    <property type="evidence" value="ECO:0007669"/>
    <property type="project" value="UniProtKB-KW"/>
</dbReference>
<dbReference type="GO" id="GO:0019288">
    <property type="term" value="P:isopentenyl diphosphate biosynthetic process, methylerythritol 4-phosphate pathway"/>
    <property type="evidence" value="ECO:0007669"/>
    <property type="project" value="UniProtKB-UniRule"/>
</dbReference>
<dbReference type="GO" id="GO:0016114">
    <property type="term" value="P:terpenoid biosynthetic process"/>
    <property type="evidence" value="ECO:0007669"/>
    <property type="project" value="InterPro"/>
</dbReference>
<dbReference type="CDD" id="cd00554">
    <property type="entry name" value="MECDP_synthase"/>
    <property type="match status" value="1"/>
</dbReference>
<dbReference type="FunFam" id="3.30.1330.50:FF:000001">
    <property type="entry name" value="2-C-methyl-D-erythritol 2,4-cyclodiphosphate synthase"/>
    <property type="match status" value="1"/>
</dbReference>
<dbReference type="Gene3D" id="3.30.1330.50">
    <property type="entry name" value="2-C-methyl-D-erythritol 2,4-cyclodiphosphate synthase"/>
    <property type="match status" value="1"/>
</dbReference>
<dbReference type="HAMAP" id="MF_00107">
    <property type="entry name" value="IspF"/>
    <property type="match status" value="1"/>
</dbReference>
<dbReference type="InterPro" id="IPR003526">
    <property type="entry name" value="MECDP_synthase"/>
</dbReference>
<dbReference type="InterPro" id="IPR020555">
    <property type="entry name" value="MECDP_synthase_CS"/>
</dbReference>
<dbReference type="InterPro" id="IPR036571">
    <property type="entry name" value="MECDP_synthase_sf"/>
</dbReference>
<dbReference type="NCBIfam" id="TIGR00151">
    <property type="entry name" value="ispF"/>
    <property type="match status" value="1"/>
</dbReference>
<dbReference type="PANTHER" id="PTHR43181">
    <property type="entry name" value="2-C-METHYL-D-ERYTHRITOL 2,4-CYCLODIPHOSPHATE SYNTHASE, CHLOROPLASTIC"/>
    <property type="match status" value="1"/>
</dbReference>
<dbReference type="PANTHER" id="PTHR43181:SF1">
    <property type="entry name" value="2-C-METHYL-D-ERYTHRITOL 2,4-CYCLODIPHOSPHATE SYNTHASE, CHLOROPLASTIC"/>
    <property type="match status" value="1"/>
</dbReference>
<dbReference type="Pfam" id="PF02542">
    <property type="entry name" value="YgbB"/>
    <property type="match status" value="1"/>
</dbReference>
<dbReference type="SUPFAM" id="SSF69765">
    <property type="entry name" value="IpsF-like"/>
    <property type="match status" value="1"/>
</dbReference>
<dbReference type="PROSITE" id="PS01350">
    <property type="entry name" value="ISPF"/>
    <property type="match status" value="1"/>
</dbReference>
<accession>Q7NYL5</accession>
<gene>
    <name evidence="1" type="primary">ispF</name>
    <name type="ordered locus">CV_1259</name>
</gene>
<proteinExistence type="inferred from homology"/>
<evidence type="ECO:0000255" key="1">
    <source>
        <dbReference type="HAMAP-Rule" id="MF_00107"/>
    </source>
</evidence>